<feature type="chain" id="PRO_1000140166" description="Anhydro-N-acetylmuramic acid kinase">
    <location>
        <begin position="1"/>
        <end position="370"/>
    </location>
</feature>
<feature type="binding site" evidence="1">
    <location>
        <begin position="12"/>
        <end position="19"/>
    </location>
    <ligand>
        <name>ATP</name>
        <dbReference type="ChEBI" id="CHEBI:30616"/>
    </ligand>
</feature>
<sequence length="370" mass="39806">MKAGRYIGVMSGTSLDGVDVVLAAISNKLVAQQANHFLPYPQTLRQRILAVCQGQPVTLHELGLLDAQLGELYAKAIMELLAKARLSAADITAIGCHGQTIWHEPESDIPFTMQIGDNNRVAALTGITTVGDFRRRDMAYGGQGAPLVPAFHLAVLGHPTEKRIVLNIGGIANISLLLPGVAVKGYDTGPGNMLLDSWNWVHNQTAYDDNGQWAATGNVNTQLLQEMLADPYFSRSAPKSTGREYFNTQWLHYHLAKVPNVFPEDVQATLVELTAISIAQQVQLNGGCERLLVCGGGAKNGQIMHRLASLLPGTEVSLTDKYGLSGDDMEALAFAWLAARTMANEPGNLPSVTGASRETILGAIYPTNPR</sequence>
<comment type="function">
    <text evidence="1">Catalyzes the specific phosphorylation of 1,6-anhydro-N-acetylmuramic acid (anhMurNAc) with the simultaneous cleavage of the 1,6-anhydro ring, generating MurNAc-6-P. Is required for the utilization of anhMurNAc either imported from the medium or derived from its own cell wall murein, and thus plays a role in cell wall recycling.</text>
</comment>
<comment type="catalytic activity">
    <reaction evidence="1">
        <text>1,6-anhydro-N-acetyl-beta-muramate + ATP + H2O = N-acetyl-D-muramate 6-phosphate + ADP + H(+)</text>
        <dbReference type="Rhea" id="RHEA:24952"/>
        <dbReference type="ChEBI" id="CHEBI:15377"/>
        <dbReference type="ChEBI" id="CHEBI:15378"/>
        <dbReference type="ChEBI" id="CHEBI:30616"/>
        <dbReference type="ChEBI" id="CHEBI:58690"/>
        <dbReference type="ChEBI" id="CHEBI:58722"/>
        <dbReference type="ChEBI" id="CHEBI:456216"/>
        <dbReference type="EC" id="2.7.1.170"/>
    </reaction>
</comment>
<comment type="pathway">
    <text evidence="1">Amino-sugar metabolism; 1,6-anhydro-N-acetylmuramate degradation.</text>
</comment>
<comment type="pathway">
    <text evidence="1">Cell wall biogenesis; peptidoglycan recycling.</text>
</comment>
<comment type="similarity">
    <text evidence="1">Belongs to the anhydro-N-acetylmuramic acid kinase family.</text>
</comment>
<protein>
    <recommendedName>
        <fullName evidence="1">Anhydro-N-acetylmuramic acid kinase</fullName>
        <ecNumber evidence="1">2.7.1.170</ecNumber>
    </recommendedName>
    <alternativeName>
        <fullName evidence="1">AnhMurNAc kinase</fullName>
    </alternativeName>
</protein>
<name>ANMK_PROMH</name>
<proteinExistence type="inferred from homology"/>
<evidence type="ECO:0000255" key="1">
    <source>
        <dbReference type="HAMAP-Rule" id="MF_01270"/>
    </source>
</evidence>
<keyword id="KW-0067">ATP-binding</keyword>
<keyword id="KW-0119">Carbohydrate metabolism</keyword>
<keyword id="KW-0418">Kinase</keyword>
<keyword id="KW-0547">Nucleotide-binding</keyword>
<keyword id="KW-1185">Reference proteome</keyword>
<keyword id="KW-0808">Transferase</keyword>
<dbReference type="EC" id="2.7.1.170" evidence="1"/>
<dbReference type="EMBL" id="AM942759">
    <property type="protein sequence ID" value="CAR42939.1"/>
    <property type="molecule type" value="Genomic_DNA"/>
</dbReference>
<dbReference type="RefSeq" id="WP_004243120.1">
    <property type="nucleotide sequence ID" value="NC_010554.1"/>
</dbReference>
<dbReference type="SMR" id="B4EWL8"/>
<dbReference type="EnsemblBacteria" id="CAR42939">
    <property type="protein sequence ID" value="CAR42939"/>
    <property type="gene ID" value="PMI1388"/>
</dbReference>
<dbReference type="GeneID" id="6800924"/>
<dbReference type="KEGG" id="pmr:PMI1388"/>
<dbReference type="eggNOG" id="COG2377">
    <property type="taxonomic scope" value="Bacteria"/>
</dbReference>
<dbReference type="HOGENOM" id="CLU_038782_0_0_6"/>
<dbReference type="UniPathway" id="UPA00343"/>
<dbReference type="UniPathway" id="UPA00544"/>
<dbReference type="Proteomes" id="UP000008319">
    <property type="component" value="Chromosome"/>
</dbReference>
<dbReference type="GO" id="GO:0005524">
    <property type="term" value="F:ATP binding"/>
    <property type="evidence" value="ECO:0007669"/>
    <property type="project" value="UniProtKB-UniRule"/>
</dbReference>
<dbReference type="GO" id="GO:0016301">
    <property type="term" value="F:kinase activity"/>
    <property type="evidence" value="ECO:0007669"/>
    <property type="project" value="UniProtKB-KW"/>
</dbReference>
<dbReference type="GO" id="GO:0016773">
    <property type="term" value="F:phosphotransferase activity, alcohol group as acceptor"/>
    <property type="evidence" value="ECO:0007669"/>
    <property type="project" value="UniProtKB-UniRule"/>
</dbReference>
<dbReference type="GO" id="GO:0097175">
    <property type="term" value="P:1,6-anhydro-N-acetyl-beta-muramic acid catabolic process"/>
    <property type="evidence" value="ECO:0007669"/>
    <property type="project" value="UniProtKB-UniRule"/>
</dbReference>
<dbReference type="GO" id="GO:0006040">
    <property type="term" value="P:amino sugar metabolic process"/>
    <property type="evidence" value="ECO:0007669"/>
    <property type="project" value="InterPro"/>
</dbReference>
<dbReference type="GO" id="GO:0009254">
    <property type="term" value="P:peptidoglycan turnover"/>
    <property type="evidence" value="ECO:0007669"/>
    <property type="project" value="UniProtKB-UniRule"/>
</dbReference>
<dbReference type="CDD" id="cd24050">
    <property type="entry name" value="ASKHA_NBD_ANMK"/>
    <property type="match status" value="1"/>
</dbReference>
<dbReference type="Gene3D" id="3.30.420.40">
    <property type="match status" value="2"/>
</dbReference>
<dbReference type="HAMAP" id="MF_01270">
    <property type="entry name" value="AnhMurNAc_kinase"/>
    <property type="match status" value="1"/>
</dbReference>
<dbReference type="InterPro" id="IPR005338">
    <property type="entry name" value="Anhydro_N_Ac-Mur_kinase"/>
</dbReference>
<dbReference type="InterPro" id="IPR043129">
    <property type="entry name" value="ATPase_NBD"/>
</dbReference>
<dbReference type="NCBIfam" id="NF007138">
    <property type="entry name" value="PRK09585.1-1"/>
    <property type="match status" value="1"/>
</dbReference>
<dbReference type="NCBIfam" id="NF007139">
    <property type="entry name" value="PRK09585.1-3"/>
    <property type="match status" value="1"/>
</dbReference>
<dbReference type="NCBIfam" id="NF007148">
    <property type="entry name" value="PRK09585.3-2"/>
    <property type="match status" value="1"/>
</dbReference>
<dbReference type="PANTHER" id="PTHR30605">
    <property type="entry name" value="ANHYDRO-N-ACETYLMURAMIC ACID KINASE"/>
    <property type="match status" value="1"/>
</dbReference>
<dbReference type="PANTHER" id="PTHR30605:SF0">
    <property type="entry name" value="ANHYDRO-N-ACETYLMURAMIC ACID KINASE"/>
    <property type="match status" value="1"/>
</dbReference>
<dbReference type="Pfam" id="PF03702">
    <property type="entry name" value="AnmK"/>
    <property type="match status" value="1"/>
</dbReference>
<dbReference type="SUPFAM" id="SSF53067">
    <property type="entry name" value="Actin-like ATPase domain"/>
    <property type="match status" value="1"/>
</dbReference>
<reference key="1">
    <citation type="journal article" date="2008" name="J. Bacteriol.">
        <title>Complete genome sequence of uropathogenic Proteus mirabilis, a master of both adherence and motility.</title>
        <authorList>
            <person name="Pearson M.M."/>
            <person name="Sebaihia M."/>
            <person name="Churcher C."/>
            <person name="Quail M.A."/>
            <person name="Seshasayee A.S."/>
            <person name="Luscombe N.M."/>
            <person name="Abdellah Z."/>
            <person name="Arrosmith C."/>
            <person name="Atkin B."/>
            <person name="Chillingworth T."/>
            <person name="Hauser H."/>
            <person name="Jagels K."/>
            <person name="Moule S."/>
            <person name="Mungall K."/>
            <person name="Norbertczak H."/>
            <person name="Rabbinowitsch E."/>
            <person name="Walker D."/>
            <person name="Whithead S."/>
            <person name="Thomson N.R."/>
            <person name="Rather P.N."/>
            <person name="Parkhill J."/>
            <person name="Mobley H.L.T."/>
        </authorList>
    </citation>
    <scope>NUCLEOTIDE SEQUENCE [LARGE SCALE GENOMIC DNA]</scope>
    <source>
        <strain>HI4320</strain>
    </source>
</reference>
<gene>
    <name evidence="1" type="primary">anmK</name>
    <name type="ordered locus">PMI1388</name>
</gene>
<organism>
    <name type="scientific">Proteus mirabilis (strain HI4320)</name>
    <dbReference type="NCBI Taxonomy" id="529507"/>
    <lineage>
        <taxon>Bacteria</taxon>
        <taxon>Pseudomonadati</taxon>
        <taxon>Pseudomonadota</taxon>
        <taxon>Gammaproteobacteria</taxon>
        <taxon>Enterobacterales</taxon>
        <taxon>Morganellaceae</taxon>
        <taxon>Proteus</taxon>
    </lineage>
</organism>
<accession>B4EWL8</accession>